<reference key="1">
    <citation type="journal article" date="1990" name="Biol. Chem. Hoppe-Seyler">
        <title>Primary structure and oxygen-binding properties of the hemoglobin from guanaco (Lama guanacoe, Tylopoda).</title>
        <authorList>
            <person name="Piccinini M."/>
            <person name="Kleinschmidt T."/>
            <person name="Jurgens K.D."/>
            <person name="Braunitzer G."/>
        </authorList>
    </citation>
    <scope>PROTEIN SEQUENCE OF 2-147</scope>
</reference>
<organism>
    <name type="scientific">Vicugna pacos</name>
    <name type="common">Alpaca</name>
    <name type="synonym">Lama pacos</name>
    <dbReference type="NCBI Taxonomy" id="30538"/>
    <lineage>
        <taxon>Eukaryota</taxon>
        <taxon>Metazoa</taxon>
        <taxon>Chordata</taxon>
        <taxon>Craniata</taxon>
        <taxon>Vertebrata</taxon>
        <taxon>Euteleostomi</taxon>
        <taxon>Mammalia</taxon>
        <taxon>Eutheria</taxon>
        <taxon>Laurasiatheria</taxon>
        <taxon>Artiodactyla</taxon>
        <taxon>Tylopoda</taxon>
        <taxon>Camelidae</taxon>
        <taxon>Vicugna</taxon>
    </lineage>
</organism>
<proteinExistence type="evidence at protein level"/>
<feature type="initiator methionine" description="Removed" evidence="1 2">
    <location>
        <position position="1"/>
    </location>
</feature>
<feature type="chain" id="PRO_0000052982" description="Hemoglobin subunit beta">
    <location>
        <begin position="2"/>
        <end position="147"/>
    </location>
</feature>
<feature type="domain" description="Globin" evidence="4">
    <location>
        <begin position="3"/>
        <end position="147"/>
    </location>
</feature>
<feature type="binding site" description="distal binding residue">
    <location>
        <position position="64"/>
    </location>
    <ligand>
        <name>heme b</name>
        <dbReference type="ChEBI" id="CHEBI:60344"/>
    </ligand>
    <ligandPart>
        <name>Fe</name>
        <dbReference type="ChEBI" id="CHEBI:18248"/>
    </ligandPart>
</feature>
<feature type="binding site" description="proximal binding residue">
    <location>
        <position position="93"/>
    </location>
    <ligand>
        <name>heme b</name>
        <dbReference type="ChEBI" id="CHEBI:60344"/>
    </ligand>
    <ligandPart>
        <name>Fe</name>
        <dbReference type="ChEBI" id="CHEBI:18248"/>
    </ligandPart>
</feature>
<feature type="modified residue" description="N-acetylvaline" evidence="1">
    <location>
        <position position="2"/>
    </location>
</feature>
<feature type="modified residue" description="Phosphoserine" evidence="3">
    <location>
        <position position="45"/>
    </location>
</feature>
<feature type="modified residue" description="N6-acetyllysine" evidence="3">
    <location>
        <position position="60"/>
    </location>
</feature>
<feature type="modified residue" description="N6-acetyllysine" evidence="3">
    <location>
        <position position="83"/>
    </location>
</feature>
<feature type="modified residue" description="S-nitrosocysteine" evidence="3">
    <location>
        <position position="94"/>
    </location>
</feature>
<keyword id="KW-0007">Acetylation</keyword>
<keyword id="KW-0903">Direct protein sequencing</keyword>
<keyword id="KW-0349">Heme</keyword>
<keyword id="KW-0408">Iron</keyword>
<keyword id="KW-0479">Metal-binding</keyword>
<keyword id="KW-0561">Oxygen transport</keyword>
<keyword id="KW-0597">Phosphoprotein</keyword>
<keyword id="KW-1185">Reference proteome</keyword>
<keyword id="KW-0702">S-nitrosylation</keyword>
<keyword id="KW-0813">Transport</keyword>
<dbReference type="PIR" id="D25478">
    <property type="entry name" value="D25478"/>
</dbReference>
<dbReference type="SMR" id="P68228"/>
<dbReference type="FunCoup" id="P68228">
    <property type="interactions" value="169"/>
</dbReference>
<dbReference type="GeneID" id="102525863"/>
<dbReference type="KEGG" id="vpc:102525863"/>
<dbReference type="HOGENOM" id="CLU_003827_10_0_1"/>
<dbReference type="InParanoid" id="P68228"/>
<dbReference type="OMA" id="MVEWSEN"/>
<dbReference type="OrthoDB" id="23751at91561"/>
<dbReference type="TreeFam" id="TF333268"/>
<dbReference type="Proteomes" id="UP000504605">
    <property type="component" value="Chromosome 10"/>
</dbReference>
<dbReference type="GO" id="GO:0072562">
    <property type="term" value="C:blood microparticle"/>
    <property type="evidence" value="ECO:0007669"/>
    <property type="project" value="TreeGrafter"/>
</dbReference>
<dbReference type="GO" id="GO:0031838">
    <property type="term" value="C:haptoglobin-hemoglobin complex"/>
    <property type="evidence" value="ECO:0007669"/>
    <property type="project" value="TreeGrafter"/>
</dbReference>
<dbReference type="GO" id="GO:0005833">
    <property type="term" value="C:hemoglobin complex"/>
    <property type="evidence" value="ECO:0007669"/>
    <property type="project" value="InterPro"/>
</dbReference>
<dbReference type="GO" id="GO:0031720">
    <property type="term" value="F:haptoglobin binding"/>
    <property type="evidence" value="ECO:0007669"/>
    <property type="project" value="TreeGrafter"/>
</dbReference>
<dbReference type="GO" id="GO:0020037">
    <property type="term" value="F:heme binding"/>
    <property type="evidence" value="ECO:0007669"/>
    <property type="project" value="InterPro"/>
</dbReference>
<dbReference type="GO" id="GO:0031721">
    <property type="term" value="F:hemoglobin alpha binding"/>
    <property type="evidence" value="ECO:0007669"/>
    <property type="project" value="TreeGrafter"/>
</dbReference>
<dbReference type="GO" id="GO:0046872">
    <property type="term" value="F:metal ion binding"/>
    <property type="evidence" value="ECO:0007669"/>
    <property type="project" value="UniProtKB-KW"/>
</dbReference>
<dbReference type="GO" id="GO:0043177">
    <property type="term" value="F:organic acid binding"/>
    <property type="evidence" value="ECO:0007669"/>
    <property type="project" value="TreeGrafter"/>
</dbReference>
<dbReference type="GO" id="GO:0019825">
    <property type="term" value="F:oxygen binding"/>
    <property type="evidence" value="ECO:0007669"/>
    <property type="project" value="InterPro"/>
</dbReference>
<dbReference type="GO" id="GO:0005344">
    <property type="term" value="F:oxygen carrier activity"/>
    <property type="evidence" value="ECO:0007669"/>
    <property type="project" value="UniProtKB-KW"/>
</dbReference>
<dbReference type="GO" id="GO:0004601">
    <property type="term" value="F:peroxidase activity"/>
    <property type="evidence" value="ECO:0007669"/>
    <property type="project" value="TreeGrafter"/>
</dbReference>
<dbReference type="GO" id="GO:0042744">
    <property type="term" value="P:hydrogen peroxide catabolic process"/>
    <property type="evidence" value="ECO:0007669"/>
    <property type="project" value="TreeGrafter"/>
</dbReference>
<dbReference type="CDD" id="cd08925">
    <property type="entry name" value="Hb-beta-like"/>
    <property type="match status" value="1"/>
</dbReference>
<dbReference type="FunFam" id="1.10.490.10:FF:000001">
    <property type="entry name" value="Hemoglobin subunit beta"/>
    <property type="match status" value="1"/>
</dbReference>
<dbReference type="Gene3D" id="1.10.490.10">
    <property type="entry name" value="Globins"/>
    <property type="match status" value="1"/>
</dbReference>
<dbReference type="InterPro" id="IPR000971">
    <property type="entry name" value="Globin"/>
</dbReference>
<dbReference type="InterPro" id="IPR009050">
    <property type="entry name" value="Globin-like_sf"/>
</dbReference>
<dbReference type="InterPro" id="IPR012292">
    <property type="entry name" value="Globin/Proto"/>
</dbReference>
<dbReference type="InterPro" id="IPR002337">
    <property type="entry name" value="Hemoglobin_b"/>
</dbReference>
<dbReference type="InterPro" id="IPR050056">
    <property type="entry name" value="Hemoglobin_oxygen_transport"/>
</dbReference>
<dbReference type="PANTHER" id="PTHR11442">
    <property type="entry name" value="HEMOGLOBIN FAMILY MEMBER"/>
    <property type="match status" value="1"/>
</dbReference>
<dbReference type="PANTHER" id="PTHR11442:SF42">
    <property type="entry name" value="HEMOGLOBIN SUBUNIT BETA"/>
    <property type="match status" value="1"/>
</dbReference>
<dbReference type="Pfam" id="PF00042">
    <property type="entry name" value="Globin"/>
    <property type="match status" value="1"/>
</dbReference>
<dbReference type="PRINTS" id="PR00814">
    <property type="entry name" value="BETAHAEM"/>
</dbReference>
<dbReference type="SUPFAM" id="SSF46458">
    <property type="entry name" value="Globin-like"/>
    <property type="match status" value="1"/>
</dbReference>
<dbReference type="PROSITE" id="PS01033">
    <property type="entry name" value="GLOBIN"/>
    <property type="match status" value="1"/>
</dbReference>
<protein>
    <recommendedName>
        <fullName>Hemoglobin subunit beta</fullName>
    </recommendedName>
    <alternativeName>
        <fullName>Beta-globin</fullName>
    </alternativeName>
    <alternativeName>
        <fullName>Hemoglobin beta chain</fullName>
    </alternativeName>
</protein>
<sequence>MVNLSGDEKNAVHGLWSKVKVDEVGGEALGRLLVVYPWTRRFFESFGDLSTADAVMNNPKVKAHGSKVLNSFGDGLSHLDNLKGTYAKLSELHCDKLHVDPENFRLLGNVLVVVLARHFGKEFTPDLQAAYQKVVAGVANALAHRYH</sequence>
<evidence type="ECO:0000250" key="1">
    <source>
        <dbReference type="UniProtKB" id="P02086"/>
    </source>
</evidence>
<evidence type="ECO:0000250" key="2">
    <source>
        <dbReference type="UniProtKB" id="P18983"/>
    </source>
</evidence>
<evidence type="ECO:0000250" key="3">
    <source>
        <dbReference type="UniProtKB" id="P68871"/>
    </source>
</evidence>
<evidence type="ECO:0000255" key="4">
    <source>
        <dbReference type="PROSITE-ProRule" id="PRU00238"/>
    </source>
</evidence>
<name>HBB_VICPA</name>
<comment type="function">
    <text>Involved in oxygen transport from the lung to the various peripheral tissues.</text>
</comment>
<comment type="subunit">
    <text>Heterotetramer of two alpha chains and two beta chains.</text>
</comment>
<comment type="tissue specificity">
    <text>Red blood cells.</text>
</comment>
<comment type="similarity">
    <text evidence="4">Belongs to the globin family.</text>
</comment>
<accession>P68228</accession>
<accession>P02068</accession>
<gene>
    <name type="primary">HBB</name>
</gene>